<feature type="chain" id="PRO_0000333108" description="Na(+)/H(+) antiporter NhaB">
    <location>
        <begin position="1"/>
        <end position="500"/>
    </location>
</feature>
<feature type="transmembrane region" description="Helical" evidence="1">
    <location>
        <begin position="28"/>
        <end position="50"/>
    </location>
</feature>
<feature type="transmembrane region" description="Helical" evidence="1">
    <location>
        <begin position="68"/>
        <end position="88"/>
    </location>
</feature>
<feature type="transmembrane region" description="Helical" evidence="1">
    <location>
        <begin position="98"/>
        <end position="118"/>
    </location>
</feature>
<feature type="transmembrane region" description="Helical" evidence="1">
    <location>
        <begin position="121"/>
        <end position="141"/>
    </location>
</feature>
<feature type="transmembrane region" description="Helical" evidence="1">
    <location>
        <begin position="145"/>
        <end position="165"/>
    </location>
</feature>
<feature type="transmembrane region" description="Helical" evidence="1">
    <location>
        <begin position="205"/>
        <end position="225"/>
    </location>
</feature>
<feature type="transmembrane region" description="Helical" evidence="1">
    <location>
        <begin position="244"/>
        <end position="264"/>
    </location>
</feature>
<feature type="transmembrane region" description="Helical" evidence="1">
    <location>
        <begin position="311"/>
        <end position="331"/>
    </location>
</feature>
<feature type="transmembrane region" description="Helical" evidence="1">
    <location>
        <begin position="350"/>
        <end position="370"/>
    </location>
</feature>
<feature type="transmembrane region" description="Helical" evidence="1">
    <location>
        <begin position="394"/>
        <end position="414"/>
    </location>
</feature>
<feature type="transmembrane region" description="Helical" evidence="1">
    <location>
        <begin position="449"/>
        <end position="469"/>
    </location>
</feature>
<feature type="transmembrane region" description="Helical" evidence="1">
    <location>
        <begin position="477"/>
        <end position="497"/>
    </location>
</feature>
<organism>
    <name type="scientific">Pseudomonas aeruginosa (strain UCBPP-PA14)</name>
    <dbReference type="NCBI Taxonomy" id="208963"/>
    <lineage>
        <taxon>Bacteria</taxon>
        <taxon>Pseudomonadati</taxon>
        <taxon>Pseudomonadota</taxon>
        <taxon>Gammaproteobacteria</taxon>
        <taxon>Pseudomonadales</taxon>
        <taxon>Pseudomonadaceae</taxon>
        <taxon>Pseudomonas</taxon>
    </lineage>
</organism>
<sequence>MSSPLSQAFAQNFLGHSPRWYKLTVLAFLLLNPLLLWLAGPVTSAWVLVGEFIFTLAMALKCYPLQPGGLLVLEALLLGLATPEALYAELQHNFPVLLLLMFMVAGIYFMKDLLLLLFSRLLLGVRSKALLSLLFCLLAALLSAFLDALTVTAVVISVAVAFFAVYHRVASGQRASEDYDPATDRQVPELHRAHLEEFRAFLRSLLMHAAVGTALGGVCTLVGEPQNLLIGHEAGWHFVEFFRQVAPVSMPVLAAGLLTCVLLEKSRRFGYGAQLPAAVRQVLAEYAASESRKRGAQQKAALLVQALAALVLIVGLALHVAEVGLIGLLVIVLITAFTGVTDEHQIGRAFQEALPFTALLVVFFAVVAVIHQQHLFTPIIQAVLALPAERQPGMLFIANGLLSAISDNVFVATIYITEVKQALDAGHMSREHFDTLAVAINTGTNLPSVATPNGQAAFLFLLTSSIAPLVRLSYGRMVWMALPYTLVMGGLGWWAVSHWL</sequence>
<name>NHAB_PSEAB</name>
<keyword id="KW-0050">Antiport</keyword>
<keyword id="KW-0997">Cell inner membrane</keyword>
<keyword id="KW-1003">Cell membrane</keyword>
<keyword id="KW-0406">Ion transport</keyword>
<keyword id="KW-0472">Membrane</keyword>
<keyword id="KW-0915">Sodium</keyword>
<keyword id="KW-0739">Sodium transport</keyword>
<keyword id="KW-0812">Transmembrane</keyword>
<keyword id="KW-1133">Transmembrane helix</keyword>
<keyword id="KW-0813">Transport</keyword>
<accession>Q02KW3</accession>
<gene>
    <name evidence="1" type="primary">nhaB</name>
    <name type="ordered locus">PA14_41000</name>
</gene>
<protein>
    <recommendedName>
        <fullName evidence="1">Na(+)/H(+) antiporter NhaB</fullName>
    </recommendedName>
    <alternativeName>
        <fullName evidence="1">Sodium/proton antiporter NhaB</fullName>
    </alternativeName>
</protein>
<reference key="1">
    <citation type="journal article" date="2006" name="Genome Biol.">
        <title>Genomic analysis reveals that Pseudomonas aeruginosa virulence is combinatorial.</title>
        <authorList>
            <person name="Lee D.G."/>
            <person name="Urbach J.M."/>
            <person name="Wu G."/>
            <person name="Liberati N.T."/>
            <person name="Feinbaum R.L."/>
            <person name="Miyata S."/>
            <person name="Diggins L.T."/>
            <person name="He J."/>
            <person name="Saucier M."/>
            <person name="Deziel E."/>
            <person name="Friedman L."/>
            <person name="Li L."/>
            <person name="Grills G."/>
            <person name="Montgomery K."/>
            <person name="Kucherlapati R."/>
            <person name="Rahme L.G."/>
            <person name="Ausubel F.M."/>
        </authorList>
    </citation>
    <scope>NUCLEOTIDE SEQUENCE [LARGE SCALE GENOMIC DNA]</scope>
    <source>
        <strain>UCBPP-PA14</strain>
    </source>
</reference>
<comment type="function">
    <text evidence="1">Na(+)/H(+) antiporter that extrudes sodium in exchange for external protons.</text>
</comment>
<comment type="catalytic activity">
    <reaction evidence="1">
        <text>2 Na(+)(in) + 3 H(+)(out) = 2 Na(+)(out) + 3 H(+)(in)</text>
        <dbReference type="Rhea" id="RHEA:29247"/>
        <dbReference type="ChEBI" id="CHEBI:15378"/>
        <dbReference type="ChEBI" id="CHEBI:29101"/>
    </reaction>
    <physiologicalReaction direction="left-to-right" evidence="1">
        <dbReference type="Rhea" id="RHEA:29248"/>
    </physiologicalReaction>
</comment>
<comment type="subcellular location">
    <subcellularLocation>
        <location evidence="1">Cell inner membrane</location>
        <topology evidence="1">Multi-pass membrane protein</topology>
    </subcellularLocation>
</comment>
<comment type="similarity">
    <text evidence="1">Belongs to the NhaB Na(+)/H(+) (TC 2.A.34) antiporter family.</text>
</comment>
<evidence type="ECO:0000255" key="1">
    <source>
        <dbReference type="HAMAP-Rule" id="MF_01599"/>
    </source>
</evidence>
<dbReference type="EMBL" id="CP000438">
    <property type="protein sequence ID" value="ABJ11006.1"/>
    <property type="molecule type" value="Genomic_DNA"/>
</dbReference>
<dbReference type="RefSeq" id="WP_003087967.1">
    <property type="nucleotide sequence ID" value="NZ_CP034244.1"/>
</dbReference>
<dbReference type="SMR" id="Q02KW3"/>
<dbReference type="KEGG" id="pau:PA14_41000"/>
<dbReference type="PseudoCAP" id="PA14_41000"/>
<dbReference type="HOGENOM" id="CLU_041110_0_0_6"/>
<dbReference type="BioCyc" id="PAER208963:G1G74-3433-MONOMER"/>
<dbReference type="Proteomes" id="UP000000653">
    <property type="component" value="Chromosome"/>
</dbReference>
<dbReference type="GO" id="GO:0005886">
    <property type="term" value="C:plasma membrane"/>
    <property type="evidence" value="ECO:0007669"/>
    <property type="project" value="UniProtKB-SubCell"/>
</dbReference>
<dbReference type="GO" id="GO:0015385">
    <property type="term" value="F:sodium:proton antiporter activity"/>
    <property type="evidence" value="ECO:0007669"/>
    <property type="project" value="InterPro"/>
</dbReference>
<dbReference type="HAMAP" id="MF_01599">
    <property type="entry name" value="NhaB"/>
    <property type="match status" value="1"/>
</dbReference>
<dbReference type="InterPro" id="IPR004671">
    <property type="entry name" value="Na+/H+_antiporter_NhaB"/>
</dbReference>
<dbReference type="NCBIfam" id="NF007093">
    <property type="entry name" value="PRK09547.1"/>
    <property type="match status" value="1"/>
</dbReference>
<dbReference type="PANTHER" id="PTHR43302:SF1">
    <property type="entry name" value="NA(+)_H(+) ANTIPORTER NHAB"/>
    <property type="match status" value="1"/>
</dbReference>
<dbReference type="PANTHER" id="PTHR43302">
    <property type="entry name" value="TRANSPORTER ARSB-RELATED"/>
    <property type="match status" value="1"/>
</dbReference>
<dbReference type="Pfam" id="PF06450">
    <property type="entry name" value="NhaB"/>
    <property type="match status" value="1"/>
</dbReference>
<proteinExistence type="inferred from homology"/>